<gene>
    <name evidence="1" type="primary">rplJ</name>
    <name type="ordered locus">A1G_01025</name>
</gene>
<feature type="chain" id="PRO_1000005581" description="Large ribosomal subunit protein uL10">
    <location>
        <begin position="1"/>
        <end position="169"/>
    </location>
</feature>
<accession>A8GQW2</accession>
<organism>
    <name type="scientific">Rickettsia rickettsii (strain Sheila Smith)</name>
    <dbReference type="NCBI Taxonomy" id="392021"/>
    <lineage>
        <taxon>Bacteria</taxon>
        <taxon>Pseudomonadati</taxon>
        <taxon>Pseudomonadota</taxon>
        <taxon>Alphaproteobacteria</taxon>
        <taxon>Rickettsiales</taxon>
        <taxon>Rickettsiaceae</taxon>
        <taxon>Rickettsieae</taxon>
        <taxon>Rickettsia</taxon>
        <taxon>spotted fever group</taxon>
    </lineage>
</organism>
<keyword id="KW-0687">Ribonucleoprotein</keyword>
<keyword id="KW-0689">Ribosomal protein</keyword>
<keyword id="KW-0694">RNA-binding</keyword>
<keyword id="KW-0699">rRNA-binding</keyword>
<sequence>MLRSEKPVAVEDIVNIYKESPSIIITHYHGLTVSQVSVLREALKSKEAGFKVVKNTLAKIAANQTGLNSIANLFAGPTAIVYSKEPVEMAKLVVNFAKANDNLKIIGGIVDNHVLDEHSIKELSKLLTLNELRGKIIGLLQAPATQVVGVLQAPSSSMARVIQAYASKN</sequence>
<dbReference type="EMBL" id="CP000848">
    <property type="protein sequence ID" value="ABV75787.1"/>
    <property type="molecule type" value="Genomic_DNA"/>
</dbReference>
<dbReference type="RefSeq" id="WP_012150395.1">
    <property type="nucleotide sequence ID" value="NZ_CP121767.1"/>
</dbReference>
<dbReference type="SMR" id="A8GQW2"/>
<dbReference type="GeneID" id="79936971"/>
<dbReference type="KEGG" id="rri:A1G_01025"/>
<dbReference type="HOGENOM" id="CLU_092227_0_0_5"/>
<dbReference type="Proteomes" id="UP000006832">
    <property type="component" value="Chromosome"/>
</dbReference>
<dbReference type="GO" id="GO:0015934">
    <property type="term" value="C:large ribosomal subunit"/>
    <property type="evidence" value="ECO:0007669"/>
    <property type="project" value="InterPro"/>
</dbReference>
<dbReference type="GO" id="GO:0070180">
    <property type="term" value="F:large ribosomal subunit rRNA binding"/>
    <property type="evidence" value="ECO:0007669"/>
    <property type="project" value="UniProtKB-UniRule"/>
</dbReference>
<dbReference type="GO" id="GO:0003735">
    <property type="term" value="F:structural constituent of ribosome"/>
    <property type="evidence" value="ECO:0007669"/>
    <property type="project" value="InterPro"/>
</dbReference>
<dbReference type="GO" id="GO:0006412">
    <property type="term" value="P:translation"/>
    <property type="evidence" value="ECO:0007669"/>
    <property type="project" value="UniProtKB-UniRule"/>
</dbReference>
<dbReference type="CDD" id="cd05797">
    <property type="entry name" value="Ribosomal_L10"/>
    <property type="match status" value="1"/>
</dbReference>
<dbReference type="Gene3D" id="3.30.70.1730">
    <property type="match status" value="1"/>
</dbReference>
<dbReference type="Gene3D" id="6.10.250.290">
    <property type="match status" value="1"/>
</dbReference>
<dbReference type="HAMAP" id="MF_00362">
    <property type="entry name" value="Ribosomal_uL10"/>
    <property type="match status" value="1"/>
</dbReference>
<dbReference type="InterPro" id="IPR001790">
    <property type="entry name" value="Ribosomal_uL10"/>
</dbReference>
<dbReference type="InterPro" id="IPR043141">
    <property type="entry name" value="Ribosomal_uL10-like_sf"/>
</dbReference>
<dbReference type="InterPro" id="IPR022973">
    <property type="entry name" value="Ribosomal_uL10_bac"/>
</dbReference>
<dbReference type="InterPro" id="IPR047865">
    <property type="entry name" value="Ribosomal_uL10_bac_type"/>
</dbReference>
<dbReference type="InterPro" id="IPR002363">
    <property type="entry name" value="Ribosomal_uL10_CS_bac"/>
</dbReference>
<dbReference type="NCBIfam" id="NF000955">
    <property type="entry name" value="PRK00099.1-1"/>
    <property type="match status" value="1"/>
</dbReference>
<dbReference type="PANTHER" id="PTHR11560">
    <property type="entry name" value="39S RIBOSOMAL PROTEIN L10, MITOCHONDRIAL"/>
    <property type="match status" value="1"/>
</dbReference>
<dbReference type="Pfam" id="PF00466">
    <property type="entry name" value="Ribosomal_L10"/>
    <property type="match status" value="1"/>
</dbReference>
<dbReference type="SUPFAM" id="SSF160369">
    <property type="entry name" value="Ribosomal protein L10-like"/>
    <property type="match status" value="1"/>
</dbReference>
<dbReference type="PROSITE" id="PS01109">
    <property type="entry name" value="RIBOSOMAL_L10"/>
    <property type="match status" value="1"/>
</dbReference>
<name>RL10_RICRS</name>
<reference key="1">
    <citation type="submission" date="2007-09" db="EMBL/GenBank/DDBJ databases">
        <title>Complete genome sequence of Rickettsia rickettsii.</title>
        <authorList>
            <person name="Madan A."/>
            <person name="Fahey J."/>
            <person name="Helton E."/>
            <person name="Ketteman M."/>
            <person name="Madan A."/>
            <person name="Rodrigues S."/>
            <person name="Sanchez A."/>
            <person name="Dasch G."/>
            <person name="Eremeeva M."/>
        </authorList>
    </citation>
    <scope>NUCLEOTIDE SEQUENCE [LARGE SCALE GENOMIC DNA]</scope>
    <source>
        <strain>Sheila Smith</strain>
    </source>
</reference>
<comment type="function">
    <text evidence="1">Forms part of the ribosomal stalk, playing a central role in the interaction of the ribosome with GTP-bound translation factors.</text>
</comment>
<comment type="subunit">
    <text evidence="1">Part of the ribosomal stalk of the 50S ribosomal subunit. The N-terminus interacts with L11 and the large rRNA to form the base of the stalk. The C-terminus forms an elongated spine to which L12 dimers bind in a sequential fashion forming a multimeric L10(L12)X complex.</text>
</comment>
<comment type="similarity">
    <text evidence="1">Belongs to the universal ribosomal protein uL10 family.</text>
</comment>
<proteinExistence type="inferred from homology"/>
<protein>
    <recommendedName>
        <fullName evidence="1">Large ribosomal subunit protein uL10</fullName>
    </recommendedName>
    <alternativeName>
        <fullName evidence="2">50S ribosomal protein L10</fullName>
    </alternativeName>
</protein>
<evidence type="ECO:0000255" key="1">
    <source>
        <dbReference type="HAMAP-Rule" id="MF_00362"/>
    </source>
</evidence>
<evidence type="ECO:0000305" key="2"/>